<name>PPAX_BACCQ</name>
<accession>B9J4R5</accession>
<proteinExistence type="inferred from homology"/>
<organism>
    <name type="scientific">Bacillus cereus (strain Q1)</name>
    <dbReference type="NCBI Taxonomy" id="361100"/>
    <lineage>
        <taxon>Bacteria</taxon>
        <taxon>Bacillati</taxon>
        <taxon>Bacillota</taxon>
        <taxon>Bacilli</taxon>
        <taxon>Bacillales</taxon>
        <taxon>Bacillaceae</taxon>
        <taxon>Bacillus</taxon>
        <taxon>Bacillus cereus group</taxon>
    </lineage>
</organism>
<evidence type="ECO:0000255" key="1">
    <source>
        <dbReference type="HAMAP-Rule" id="MF_01250"/>
    </source>
</evidence>
<comment type="function">
    <text evidence="1">Hydrolyzes pyrophosphate formed during P-Ser-HPr dephosphorylation by HPrK/P. Might play a role in controlling the intracellular pyrophosphate pool.</text>
</comment>
<comment type="catalytic activity">
    <reaction evidence="1">
        <text>diphosphate + H2O = 2 phosphate + H(+)</text>
        <dbReference type="Rhea" id="RHEA:24576"/>
        <dbReference type="ChEBI" id="CHEBI:15377"/>
        <dbReference type="ChEBI" id="CHEBI:15378"/>
        <dbReference type="ChEBI" id="CHEBI:33019"/>
        <dbReference type="ChEBI" id="CHEBI:43474"/>
        <dbReference type="EC" id="3.6.1.1"/>
    </reaction>
</comment>
<comment type="cofactor">
    <cofactor evidence="1">
        <name>Mg(2+)</name>
        <dbReference type="ChEBI" id="CHEBI:18420"/>
    </cofactor>
</comment>
<comment type="similarity">
    <text evidence="1">Belongs to the HAD-like hydrolase superfamily. PpaX family.</text>
</comment>
<keyword id="KW-0378">Hydrolase</keyword>
<keyword id="KW-0460">Magnesium</keyword>
<feature type="chain" id="PRO_1000165085" description="Pyrophosphatase PpaX">
    <location>
        <begin position="1"/>
        <end position="216"/>
    </location>
</feature>
<feature type="active site" description="Nucleophile" evidence="1">
    <location>
        <position position="9"/>
    </location>
</feature>
<gene>
    <name evidence="1" type="primary">ppaX</name>
    <name type="ordered locus">BCQ_4982</name>
</gene>
<dbReference type="EC" id="3.6.1.1" evidence="1"/>
<dbReference type="EMBL" id="CP000227">
    <property type="protein sequence ID" value="ACM15382.1"/>
    <property type="molecule type" value="Genomic_DNA"/>
</dbReference>
<dbReference type="SMR" id="B9J4R5"/>
<dbReference type="KEGG" id="bcq:BCQ_4982"/>
<dbReference type="HOGENOM" id="CLU_045011_19_3_9"/>
<dbReference type="Proteomes" id="UP000000441">
    <property type="component" value="Chromosome"/>
</dbReference>
<dbReference type="GO" id="GO:0005829">
    <property type="term" value="C:cytosol"/>
    <property type="evidence" value="ECO:0007669"/>
    <property type="project" value="TreeGrafter"/>
</dbReference>
<dbReference type="GO" id="GO:0004427">
    <property type="term" value="F:inorganic diphosphate phosphatase activity"/>
    <property type="evidence" value="ECO:0007669"/>
    <property type="project" value="UniProtKB-UniRule"/>
</dbReference>
<dbReference type="GO" id="GO:0000287">
    <property type="term" value="F:magnesium ion binding"/>
    <property type="evidence" value="ECO:0007669"/>
    <property type="project" value="UniProtKB-UniRule"/>
</dbReference>
<dbReference type="GO" id="GO:0008967">
    <property type="term" value="F:phosphoglycolate phosphatase activity"/>
    <property type="evidence" value="ECO:0007669"/>
    <property type="project" value="TreeGrafter"/>
</dbReference>
<dbReference type="GO" id="GO:0006281">
    <property type="term" value="P:DNA repair"/>
    <property type="evidence" value="ECO:0007669"/>
    <property type="project" value="TreeGrafter"/>
</dbReference>
<dbReference type="CDD" id="cd02616">
    <property type="entry name" value="HAD_PPase"/>
    <property type="match status" value="1"/>
</dbReference>
<dbReference type="FunFam" id="3.40.50.1000:FF:000022">
    <property type="entry name" value="Phosphoglycolate phosphatase"/>
    <property type="match status" value="1"/>
</dbReference>
<dbReference type="FunFam" id="1.10.150.240:FF:000008">
    <property type="entry name" value="Pyrophosphatase PpaX"/>
    <property type="match status" value="1"/>
</dbReference>
<dbReference type="Gene3D" id="3.40.50.1000">
    <property type="entry name" value="HAD superfamily/HAD-like"/>
    <property type="match status" value="1"/>
</dbReference>
<dbReference type="Gene3D" id="1.10.150.240">
    <property type="entry name" value="Putative phosphatase, domain 2"/>
    <property type="match status" value="1"/>
</dbReference>
<dbReference type="HAMAP" id="MF_01250">
    <property type="entry name" value="Pyrophosphat_PpaX"/>
    <property type="match status" value="1"/>
</dbReference>
<dbReference type="InterPro" id="IPR050155">
    <property type="entry name" value="HAD-like_hydrolase_sf"/>
</dbReference>
<dbReference type="InterPro" id="IPR036412">
    <property type="entry name" value="HAD-like_sf"/>
</dbReference>
<dbReference type="InterPro" id="IPR006439">
    <property type="entry name" value="HAD-SF_hydro_IA"/>
</dbReference>
<dbReference type="InterPro" id="IPR006549">
    <property type="entry name" value="HAD-SF_hydro_IIIA"/>
</dbReference>
<dbReference type="InterPro" id="IPR041492">
    <property type="entry name" value="HAD_2"/>
</dbReference>
<dbReference type="InterPro" id="IPR023214">
    <property type="entry name" value="HAD_sf"/>
</dbReference>
<dbReference type="InterPro" id="IPR023198">
    <property type="entry name" value="PGP-like_dom2"/>
</dbReference>
<dbReference type="InterPro" id="IPR023733">
    <property type="entry name" value="Pyrophosphatase_Ppax"/>
</dbReference>
<dbReference type="NCBIfam" id="TIGR01549">
    <property type="entry name" value="HAD-SF-IA-v1"/>
    <property type="match status" value="1"/>
</dbReference>
<dbReference type="NCBIfam" id="TIGR01509">
    <property type="entry name" value="HAD-SF-IA-v3"/>
    <property type="match status" value="1"/>
</dbReference>
<dbReference type="NCBIfam" id="TIGR01662">
    <property type="entry name" value="HAD-SF-IIIA"/>
    <property type="match status" value="1"/>
</dbReference>
<dbReference type="NCBIfam" id="NF009804">
    <property type="entry name" value="PRK13288.1"/>
    <property type="match status" value="1"/>
</dbReference>
<dbReference type="PANTHER" id="PTHR43434">
    <property type="entry name" value="PHOSPHOGLYCOLATE PHOSPHATASE"/>
    <property type="match status" value="1"/>
</dbReference>
<dbReference type="PANTHER" id="PTHR43434:SF26">
    <property type="entry name" value="PYROPHOSPHATASE PPAX"/>
    <property type="match status" value="1"/>
</dbReference>
<dbReference type="Pfam" id="PF13419">
    <property type="entry name" value="HAD_2"/>
    <property type="match status" value="1"/>
</dbReference>
<dbReference type="PRINTS" id="PR00413">
    <property type="entry name" value="HADHALOGNASE"/>
</dbReference>
<dbReference type="SFLD" id="SFLDG01135">
    <property type="entry name" value="C1.5.6:_HAD__Beta-PGM__Phospha"/>
    <property type="match status" value="1"/>
</dbReference>
<dbReference type="SFLD" id="SFLDG01129">
    <property type="entry name" value="C1.5:_HAD__Beta-PGM__Phosphata"/>
    <property type="match status" value="1"/>
</dbReference>
<dbReference type="SUPFAM" id="SSF56784">
    <property type="entry name" value="HAD-like"/>
    <property type="match status" value="1"/>
</dbReference>
<sequence length="216" mass="24699">MKINTVLFDLDGTLINTNELIISSFLHTLNTYYPDQYKREDVLPFIGPSLHDTFSKIDESKVEELITSYRQFNHDHHDELVEEYETVYETVQELKKQGYKVGIVTTKARQTVEMGLKLSKLDEFFDVVVTIDDVEHVKPHPEPLQKALQLLDAKPEEALMVGDNHHDIVGGQNAGTKTAAVSWTLKGRAYLEAYKPDFMLDKMSDLLPILSDMNRS</sequence>
<protein>
    <recommendedName>
        <fullName evidence="1">Pyrophosphatase PpaX</fullName>
        <ecNumber evidence="1">3.6.1.1</ecNumber>
    </recommendedName>
</protein>
<reference key="1">
    <citation type="journal article" date="2009" name="J. Bacteriol.">
        <title>Complete genome sequence of the extremophilic Bacillus cereus strain Q1 with industrial applications.</title>
        <authorList>
            <person name="Xiong Z."/>
            <person name="Jiang Y."/>
            <person name="Qi D."/>
            <person name="Lu H."/>
            <person name="Yang F."/>
            <person name="Yang J."/>
            <person name="Chen L."/>
            <person name="Sun L."/>
            <person name="Xu X."/>
            <person name="Xue Y."/>
            <person name="Zhu Y."/>
            <person name="Jin Q."/>
        </authorList>
    </citation>
    <scope>NUCLEOTIDE SEQUENCE [LARGE SCALE GENOMIC DNA]</scope>
    <source>
        <strain>Q1</strain>
    </source>
</reference>